<dbReference type="EMBL" id="BC083257">
    <property type="protein sequence ID" value="AAH83257.1"/>
    <property type="molecule type" value="mRNA"/>
</dbReference>
<dbReference type="RefSeq" id="NP_001006065.1">
    <property type="nucleotide sequence ID" value="NM_001006065.1"/>
</dbReference>
<dbReference type="SMR" id="Q5XJP1"/>
<dbReference type="FunCoup" id="Q5XJP1">
    <property type="interactions" value="1551"/>
</dbReference>
<dbReference type="STRING" id="7955.ENSDARP00000063737"/>
<dbReference type="PaxDb" id="7955-ENSDARP00000063737"/>
<dbReference type="GeneID" id="450045"/>
<dbReference type="KEGG" id="dre:450045"/>
<dbReference type="AGR" id="ZFIN:ZDB-GENE-041010-167"/>
<dbReference type="CTD" id="7260"/>
<dbReference type="ZFIN" id="ZDB-GENE-041010-167">
    <property type="gene designation" value="eipr1"/>
</dbReference>
<dbReference type="eggNOG" id="KOG1007">
    <property type="taxonomic scope" value="Eukaryota"/>
</dbReference>
<dbReference type="InParanoid" id="Q5XJP1"/>
<dbReference type="OrthoDB" id="196957at2759"/>
<dbReference type="PhylomeDB" id="Q5XJP1"/>
<dbReference type="PRO" id="PR:Q5XJP1"/>
<dbReference type="Proteomes" id="UP000000437">
    <property type="component" value="Chromosome 17"/>
</dbReference>
<dbReference type="GO" id="GO:0005794">
    <property type="term" value="C:Golgi apparatus"/>
    <property type="evidence" value="ECO:0007669"/>
    <property type="project" value="UniProtKB-SubCell"/>
</dbReference>
<dbReference type="GO" id="GO:0032456">
    <property type="term" value="P:endocytic recycling"/>
    <property type="evidence" value="ECO:0000250"/>
    <property type="project" value="UniProtKB"/>
</dbReference>
<dbReference type="GO" id="GO:0016567">
    <property type="term" value="P:protein ubiquitination"/>
    <property type="evidence" value="ECO:0000318"/>
    <property type="project" value="GO_Central"/>
</dbReference>
<dbReference type="FunFam" id="2.130.10.10:FF:000156">
    <property type="entry name" value="protein TSSC1 isoform X1"/>
    <property type="match status" value="1"/>
</dbReference>
<dbReference type="Gene3D" id="2.130.10.10">
    <property type="entry name" value="YVTN repeat-like/Quinoprotein amine dehydrogenase"/>
    <property type="match status" value="1"/>
</dbReference>
<dbReference type="InterPro" id="IPR040323">
    <property type="entry name" value="EIPR1"/>
</dbReference>
<dbReference type="InterPro" id="IPR015943">
    <property type="entry name" value="WD40/YVTN_repeat-like_dom_sf"/>
</dbReference>
<dbReference type="InterPro" id="IPR019775">
    <property type="entry name" value="WD40_repeat_CS"/>
</dbReference>
<dbReference type="InterPro" id="IPR036322">
    <property type="entry name" value="WD40_repeat_dom_sf"/>
</dbReference>
<dbReference type="InterPro" id="IPR001680">
    <property type="entry name" value="WD40_rpt"/>
</dbReference>
<dbReference type="PANTHER" id="PTHR14205:SF15">
    <property type="entry name" value="EARP AND GARP COMPLEX-INTERACTING PROTEIN 1"/>
    <property type="match status" value="1"/>
</dbReference>
<dbReference type="PANTHER" id="PTHR14205">
    <property type="entry name" value="WD-REPEAT PROTEIN"/>
    <property type="match status" value="1"/>
</dbReference>
<dbReference type="Pfam" id="PF23609">
    <property type="entry name" value="Beta-prop_EIPR1"/>
    <property type="match status" value="1"/>
</dbReference>
<dbReference type="Pfam" id="PF00400">
    <property type="entry name" value="WD40"/>
    <property type="match status" value="1"/>
</dbReference>
<dbReference type="SMART" id="SM00320">
    <property type="entry name" value="WD40"/>
    <property type="match status" value="5"/>
</dbReference>
<dbReference type="SUPFAM" id="SSF50978">
    <property type="entry name" value="WD40 repeat-like"/>
    <property type="match status" value="1"/>
</dbReference>
<dbReference type="PROSITE" id="PS00678">
    <property type="entry name" value="WD_REPEATS_1"/>
    <property type="match status" value="1"/>
</dbReference>
<dbReference type="PROSITE" id="PS50082">
    <property type="entry name" value="WD_REPEATS_2"/>
    <property type="match status" value="1"/>
</dbReference>
<dbReference type="PROSITE" id="PS50294">
    <property type="entry name" value="WD_REPEATS_REGION"/>
    <property type="match status" value="1"/>
</dbReference>
<evidence type="ECO:0000250" key="1">
    <source>
        <dbReference type="UniProtKB" id="Q53HC9"/>
    </source>
</evidence>
<evidence type="ECO:0000250" key="2">
    <source>
        <dbReference type="UniProtKB" id="Q5PPK9"/>
    </source>
</evidence>
<evidence type="ECO:0000256" key="3">
    <source>
        <dbReference type="SAM" id="MobiDB-lite"/>
    </source>
</evidence>
<evidence type="ECO:0000305" key="4"/>
<sequence length="387" mass="43588">MEDDAPVIYGLEFQARALTAQTAETDAIRFLVGTQSLKFDNQIHIIDFDDENNMINKSVLLHDAGEIWHISGSPADKAVLTTCYNKTSESRVLTCAAVWRMPPEWESGNHESPDDSSNNPQTLELLCHLDNSAHGSMACVLWEPMGDGKRVISLAENHVLLWDLQESSAKATISSSATLEGKGQLKFTAGKWSPHHNCTQLATANDTAIRGWDLRSMSQIYCIENAHGQLVRDLDFNPNKQYYLASCGDDCKVKFWDVRHISEPVKCLEEHSHWVWSVRYNHSHDQLLLTASSDSRVILSNMVSISSEPFGHLVDDDDLSDPEENQQEDKGKEPLQDSIISTYEEHEDSVYAVEWSAADPWLFASLSYDGRLVINRVPRALKYRILL</sequence>
<reference key="1">
    <citation type="submission" date="2004-10" db="EMBL/GenBank/DDBJ databases">
        <authorList>
            <consortium name="NIH - Zebrafish Gene Collection (ZGC) project"/>
        </authorList>
    </citation>
    <scope>NUCLEOTIDE SEQUENCE [LARGE SCALE MRNA]</scope>
    <source>
        <tissue>Olfactory epithelium</tissue>
    </source>
</reference>
<protein>
    <recommendedName>
        <fullName evidence="2">EARP-interacting protein homolog</fullName>
    </recommendedName>
</protein>
<proteinExistence type="evidence at transcript level"/>
<gene>
    <name evidence="2" type="primary">eipr1</name>
    <name type="ORF">zgc:101720</name>
</gene>
<keyword id="KW-0333">Golgi apparatus</keyword>
<keyword id="KW-1185">Reference proteome</keyword>
<keyword id="KW-0677">Repeat</keyword>
<keyword id="KW-0853">WD repeat</keyword>
<organism>
    <name type="scientific">Danio rerio</name>
    <name type="common">Zebrafish</name>
    <name type="synonym">Brachydanio rerio</name>
    <dbReference type="NCBI Taxonomy" id="7955"/>
    <lineage>
        <taxon>Eukaryota</taxon>
        <taxon>Metazoa</taxon>
        <taxon>Chordata</taxon>
        <taxon>Craniata</taxon>
        <taxon>Vertebrata</taxon>
        <taxon>Euteleostomi</taxon>
        <taxon>Actinopterygii</taxon>
        <taxon>Neopterygii</taxon>
        <taxon>Teleostei</taxon>
        <taxon>Ostariophysi</taxon>
        <taxon>Cypriniformes</taxon>
        <taxon>Danionidae</taxon>
        <taxon>Danioninae</taxon>
        <taxon>Danio</taxon>
    </lineage>
</organism>
<accession>Q5XJP1</accession>
<name>EIPR1_DANRE</name>
<feature type="chain" id="PRO_0000051303" description="EARP-interacting protein homolog">
    <location>
        <begin position="1"/>
        <end position="387"/>
    </location>
</feature>
<feature type="repeat" description="WD 1">
    <location>
        <begin position="132"/>
        <end position="172"/>
    </location>
</feature>
<feature type="repeat" description="WD 2">
    <location>
        <begin position="182"/>
        <end position="222"/>
    </location>
</feature>
<feature type="repeat" description="WD 3">
    <location>
        <begin position="226"/>
        <end position="266"/>
    </location>
</feature>
<feature type="repeat" description="WD 4">
    <location>
        <begin position="270"/>
        <end position="310"/>
    </location>
</feature>
<feature type="repeat" description="WD 5">
    <location>
        <begin position="345"/>
        <end position="385"/>
    </location>
</feature>
<feature type="region of interest" description="Disordered" evidence="3">
    <location>
        <begin position="309"/>
        <end position="337"/>
    </location>
</feature>
<feature type="compositionally biased region" description="Acidic residues" evidence="3">
    <location>
        <begin position="315"/>
        <end position="326"/>
    </location>
</feature>
<comment type="function">
    <text evidence="1">May act as a component of endosomal retrieval machinery that is involved in protein transport from early endosomes to either recycling endosomes or the trans-Golgi network.</text>
</comment>
<comment type="subcellular location">
    <subcellularLocation>
        <location evidence="1">Golgi apparatus</location>
        <location evidence="1">trans-Golgi network</location>
    </subcellularLocation>
</comment>
<comment type="similarity">
    <text evidence="4">Belongs to the WD repeat EIPR1 family.</text>
</comment>